<proteinExistence type="evidence at protein level"/>
<keyword id="KW-0025">Alternative splicing</keyword>
<keyword id="KW-0106">Calcium</keyword>
<keyword id="KW-0479">Metal-binding</keyword>
<keyword id="KW-0505">Motor protein</keyword>
<keyword id="KW-0514">Muscle protein</keyword>
<keyword id="KW-0518">Myosin</keyword>
<keyword id="KW-1267">Proteomics identification</keyword>
<keyword id="KW-1185">Reference proteome</keyword>
<keyword id="KW-0677">Repeat</keyword>
<organism>
    <name type="scientific">Homo sapiens</name>
    <name type="common">Human</name>
    <dbReference type="NCBI Taxonomy" id="9606"/>
    <lineage>
        <taxon>Eukaryota</taxon>
        <taxon>Metazoa</taxon>
        <taxon>Chordata</taxon>
        <taxon>Craniata</taxon>
        <taxon>Vertebrata</taxon>
        <taxon>Euteleostomi</taxon>
        <taxon>Mammalia</taxon>
        <taxon>Eutheria</taxon>
        <taxon>Euarchontoglires</taxon>
        <taxon>Primates</taxon>
        <taxon>Haplorrhini</taxon>
        <taxon>Catarrhini</taxon>
        <taxon>Hominidae</taxon>
        <taxon>Homo</taxon>
    </lineage>
</organism>
<reference key="1">
    <citation type="journal article" date="1992" name="Hum. Mol. Genet.">
        <title>The genomic organization of a novel regulatory myosin light chain gene (MYL5) that maps to chromosome 4p16.3 and shows different patterns of expression between primates.</title>
        <authorList>
            <person name="Collins C.C."/>
            <person name="Schappert K.T."/>
            <person name="Hayden M.R."/>
        </authorList>
    </citation>
    <scope>NUCLEOTIDE SEQUENCE [MRNA] (ISOFORM 1)</scope>
</reference>
<reference key="2">
    <citation type="journal article" date="2004" name="Genome Res.">
        <title>The status, quality, and expansion of the NIH full-length cDNA project: the Mammalian Gene Collection (MGC).</title>
        <authorList>
            <consortium name="The MGC Project Team"/>
        </authorList>
    </citation>
    <scope>NUCLEOTIDE SEQUENCE [LARGE SCALE MRNA] (ISOFORM 2)</scope>
    <source>
        <tissue>Testis</tissue>
    </source>
</reference>
<gene>
    <name type="primary">MYL5</name>
</gene>
<protein>
    <recommendedName>
        <fullName>Myosin light chain 5</fullName>
    </recommendedName>
    <alternativeName>
        <fullName>Myosin regulatory light chain 5</fullName>
    </alternativeName>
    <alternativeName>
        <fullName>Superfast myosin regulatory light chain 2</fullName>
        <shortName>MYLC2</shortName>
        <shortName>MyLC-2</shortName>
    </alternativeName>
</protein>
<comment type="subunit">
    <text>Myosin is a hexamer of 2 heavy chains and 4 light chains.</text>
</comment>
<comment type="alternative products">
    <event type="alternative splicing"/>
    <isoform>
        <id>Q02045-1</id>
        <name>1</name>
        <sequence type="displayed"/>
    </isoform>
    <isoform>
        <id>Q02045-2</id>
        <name>2</name>
        <sequence type="described" ref="VSP_026448"/>
    </isoform>
</comment>
<comment type="tissue specificity">
    <text>Expressed in fetal skeletal muscle and retina.</text>
</comment>
<comment type="miscellaneous">
    <text evidence="1">This chain binds calcium.</text>
</comment>
<sequence length="173" mass="19534">MASRKTKKKEGGALRAQRASSNVFSNFEQTQIQEFKEAFTLMDQNRDGFIDKEDLKDTYASLGKTNVKDDELDAMLKEASGPINFTMFLNLFGEKLSGTDAEETILNAFKMLDPDGKGKINKEYIKRLLMSQADKMTAEEVDQMFQFASIDVAGNLDYKALSYVITHGEEKEE</sequence>
<name>MYL5_HUMAN</name>
<evidence type="ECO:0000250" key="1"/>
<evidence type="ECO:0000255" key="2">
    <source>
        <dbReference type="PROSITE-ProRule" id="PRU00448"/>
    </source>
</evidence>
<evidence type="ECO:0000256" key="3">
    <source>
        <dbReference type="SAM" id="MobiDB-lite"/>
    </source>
</evidence>
<evidence type="ECO:0000303" key="4">
    <source>
    </source>
</evidence>
<dbReference type="EMBL" id="L03785">
    <property type="protein sequence ID" value="AAA59890.1"/>
    <property type="molecule type" value="mRNA"/>
</dbReference>
<dbReference type="EMBL" id="BC040050">
    <property type="protein sequence ID" value="AAH40050.1"/>
    <property type="molecule type" value="mRNA"/>
</dbReference>
<dbReference type="CCDS" id="CCDS43197.1">
    <molecule id="Q02045-1"/>
</dbReference>
<dbReference type="CCDS" id="CCDS87196.1">
    <molecule id="Q02045-2"/>
</dbReference>
<dbReference type="PIR" id="I54328">
    <property type="entry name" value="I54328"/>
</dbReference>
<dbReference type="RefSeq" id="NP_001350579.1">
    <molecule id="Q02045-2"/>
    <property type="nucleotide sequence ID" value="NM_001363650.2"/>
</dbReference>
<dbReference type="RefSeq" id="NP_001382370.1">
    <molecule id="Q02045-1"/>
    <property type="nucleotide sequence ID" value="NM_001395441.1"/>
</dbReference>
<dbReference type="RefSeq" id="NP_001382371.1">
    <molecule id="Q02045-1"/>
    <property type="nucleotide sequence ID" value="NM_001395442.1"/>
</dbReference>
<dbReference type="RefSeq" id="NP_001382372.1">
    <molecule id="Q02045-1"/>
    <property type="nucleotide sequence ID" value="NM_001395443.1"/>
</dbReference>
<dbReference type="RefSeq" id="NP_001382373.1">
    <molecule id="Q02045-2"/>
    <property type="nucleotide sequence ID" value="NM_001395444.1"/>
</dbReference>
<dbReference type="RefSeq" id="NP_001382374.1">
    <molecule id="Q02045-2"/>
    <property type="nucleotide sequence ID" value="NM_001395445.1"/>
</dbReference>
<dbReference type="RefSeq" id="NP_001382375.1">
    <molecule id="Q02045-2"/>
    <property type="nucleotide sequence ID" value="NM_001395446.1"/>
</dbReference>
<dbReference type="RefSeq" id="NP_001382376.1">
    <molecule id="Q02045-2"/>
    <property type="nucleotide sequence ID" value="NM_001395447.1"/>
</dbReference>
<dbReference type="RefSeq" id="NP_001382377.1">
    <molecule id="Q02045-2"/>
    <property type="nucleotide sequence ID" value="NM_001395448.1"/>
</dbReference>
<dbReference type="RefSeq" id="NP_001382378.1">
    <molecule id="Q02045-2"/>
    <property type="nucleotide sequence ID" value="NM_001395449.1"/>
</dbReference>
<dbReference type="RefSeq" id="NP_002468.1">
    <molecule id="Q02045-1"/>
    <property type="nucleotide sequence ID" value="NM_002477.2"/>
</dbReference>
<dbReference type="RefSeq" id="XP_016863734.1">
    <property type="nucleotide sequence ID" value="XM_017008245.1"/>
</dbReference>
<dbReference type="RefSeq" id="XP_016863735.1">
    <property type="nucleotide sequence ID" value="XM_017008246.1"/>
</dbReference>
<dbReference type="RefSeq" id="XP_016863736.1">
    <property type="nucleotide sequence ID" value="XM_017008247.1"/>
</dbReference>
<dbReference type="RefSeq" id="XP_016863737.1">
    <property type="nucleotide sequence ID" value="XM_017008248.1"/>
</dbReference>
<dbReference type="RefSeq" id="XP_047271685.1">
    <molecule id="Q02045-1"/>
    <property type="nucleotide sequence ID" value="XM_047415729.1"/>
</dbReference>
<dbReference type="RefSeq" id="XP_047271686.1">
    <molecule id="Q02045-1"/>
    <property type="nucleotide sequence ID" value="XM_047415730.1"/>
</dbReference>
<dbReference type="RefSeq" id="XP_054206075.1">
    <molecule id="Q02045-1"/>
    <property type="nucleotide sequence ID" value="XM_054350100.1"/>
</dbReference>
<dbReference type="SMR" id="Q02045"/>
<dbReference type="BioGRID" id="110720">
    <property type="interactions" value="5"/>
</dbReference>
<dbReference type="FunCoup" id="Q02045">
    <property type="interactions" value="353"/>
</dbReference>
<dbReference type="IntAct" id="Q02045">
    <property type="interactions" value="2"/>
</dbReference>
<dbReference type="STRING" id="9606.ENSP00000383023"/>
<dbReference type="iPTMnet" id="Q02045"/>
<dbReference type="PhosphoSitePlus" id="Q02045"/>
<dbReference type="BioMuta" id="MYL5"/>
<dbReference type="DMDM" id="400266"/>
<dbReference type="MassIVE" id="Q02045"/>
<dbReference type="PaxDb" id="9606-ENSP00000383023"/>
<dbReference type="PeptideAtlas" id="Q02045"/>
<dbReference type="ProteomicsDB" id="58033">
    <molecule id="Q02045-1"/>
</dbReference>
<dbReference type="ProteomicsDB" id="58034">
    <molecule id="Q02045-2"/>
</dbReference>
<dbReference type="Antibodypedia" id="22136">
    <property type="antibodies" value="80 antibodies from 23 providers"/>
</dbReference>
<dbReference type="DNASU" id="4636"/>
<dbReference type="Ensembl" id="ENST00000400159.7">
    <molecule id="Q02045-1"/>
    <property type="protein sequence ID" value="ENSP00000383023.2"/>
    <property type="gene ID" value="ENSG00000215375.7"/>
</dbReference>
<dbReference type="Ensembl" id="ENST00000505477.5">
    <molecule id="Q02045-2"/>
    <property type="protein sequence ID" value="ENSP00000423118.1"/>
    <property type="gene ID" value="ENSG00000215375.7"/>
</dbReference>
<dbReference type="Ensembl" id="ENST00000506838.5">
    <molecule id="Q02045-2"/>
    <property type="protein sequence ID" value="ENSP00000427153.1"/>
    <property type="gene ID" value="ENSG00000215375.7"/>
</dbReference>
<dbReference type="Ensembl" id="ENST00000511290.5">
    <molecule id="Q02045-2"/>
    <property type="protein sequence ID" value="ENSP00000425162.1"/>
    <property type="gene ID" value="ENSG00000215375.7"/>
</dbReference>
<dbReference type="GeneID" id="4636"/>
<dbReference type="KEGG" id="hsa:4636"/>
<dbReference type="MANE-Select" id="ENST00000400159.7">
    <property type="protein sequence ID" value="ENSP00000383023.2"/>
    <property type="RefSeq nucleotide sequence ID" value="NM_002477.2"/>
    <property type="RefSeq protein sequence ID" value="NP_002468.1"/>
</dbReference>
<dbReference type="UCSC" id="uc003gav.4">
    <molecule id="Q02045-1"/>
    <property type="organism name" value="human"/>
</dbReference>
<dbReference type="AGR" id="HGNC:7586"/>
<dbReference type="CTD" id="4636"/>
<dbReference type="DisGeNET" id="4636"/>
<dbReference type="GeneCards" id="MYL5"/>
<dbReference type="HGNC" id="HGNC:7586">
    <property type="gene designation" value="MYL5"/>
</dbReference>
<dbReference type="HPA" id="ENSG00000215375">
    <property type="expression patterns" value="Low tissue specificity"/>
</dbReference>
<dbReference type="MIM" id="160782">
    <property type="type" value="gene"/>
</dbReference>
<dbReference type="neXtProt" id="NX_Q02045"/>
<dbReference type="OpenTargets" id="ENSG00000215375"/>
<dbReference type="PharmGKB" id="PA31383"/>
<dbReference type="VEuPathDB" id="HostDB:ENSG00000215375"/>
<dbReference type="eggNOG" id="KOG0031">
    <property type="taxonomic scope" value="Eukaryota"/>
</dbReference>
<dbReference type="GeneTree" id="ENSGT00940000163023"/>
<dbReference type="HOGENOM" id="CLU_061288_9_4_1"/>
<dbReference type="InParanoid" id="Q02045"/>
<dbReference type="OMA" id="EVNQMFQ"/>
<dbReference type="OrthoDB" id="429467at2759"/>
<dbReference type="PAN-GO" id="Q02045">
    <property type="GO annotations" value="2 GO annotations based on evolutionary models"/>
</dbReference>
<dbReference type="PhylomeDB" id="Q02045"/>
<dbReference type="TreeFam" id="TF314218"/>
<dbReference type="PathwayCommons" id="Q02045"/>
<dbReference type="Reactome" id="R-HSA-445355">
    <property type="pathway name" value="Smooth Muscle Contraction"/>
</dbReference>
<dbReference type="SignaLink" id="Q02045"/>
<dbReference type="BioGRID-ORCS" id="4636">
    <property type="hits" value="12 hits in 1155 CRISPR screens"/>
</dbReference>
<dbReference type="ChiTaRS" id="MYL5">
    <property type="organism name" value="human"/>
</dbReference>
<dbReference type="GenomeRNAi" id="4636"/>
<dbReference type="Pharos" id="Q02045">
    <property type="development level" value="Tbio"/>
</dbReference>
<dbReference type="PRO" id="PR:Q02045"/>
<dbReference type="Proteomes" id="UP000005640">
    <property type="component" value="Chromosome 4"/>
</dbReference>
<dbReference type="RNAct" id="Q02045">
    <property type="molecule type" value="protein"/>
</dbReference>
<dbReference type="Bgee" id="ENSG00000215375">
    <property type="expression patterns" value="Expressed in mucosa of transverse colon and 141 other cell types or tissues"/>
</dbReference>
<dbReference type="ExpressionAtlas" id="Q02045">
    <property type="expression patterns" value="baseline and differential"/>
</dbReference>
<dbReference type="GO" id="GO:0005737">
    <property type="term" value="C:cytoplasm"/>
    <property type="evidence" value="ECO:0000318"/>
    <property type="project" value="GO_Central"/>
</dbReference>
<dbReference type="GO" id="GO:0005829">
    <property type="term" value="C:cytosol"/>
    <property type="evidence" value="ECO:0000304"/>
    <property type="project" value="Reactome"/>
</dbReference>
<dbReference type="GO" id="GO:0005859">
    <property type="term" value="C:muscle myosin complex"/>
    <property type="evidence" value="ECO:0000304"/>
    <property type="project" value="ProtInc"/>
</dbReference>
<dbReference type="GO" id="GO:0005509">
    <property type="term" value="F:calcium ion binding"/>
    <property type="evidence" value="ECO:0000318"/>
    <property type="project" value="GO_Central"/>
</dbReference>
<dbReference type="GO" id="GO:0008307">
    <property type="term" value="F:structural constituent of muscle"/>
    <property type="evidence" value="ECO:0000304"/>
    <property type="project" value="ProtInc"/>
</dbReference>
<dbReference type="GO" id="GO:0006937">
    <property type="term" value="P:regulation of muscle contraction"/>
    <property type="evidence" value="ECO:0000304"/>
    <property type="project" value="ProtInc"/>
</dbReference>
<dbReference type="FunFam" id="1.10.238.10:FF:000010">
    <property type="entry name" value="Myosin regulatory light chain 2, atrial isoform"/>
    <property type="match status" value="1"/>
</dbReference>
<dbReference type="FunFam" id="1.10.238.10:FF:000007">
    <property type="entry name" value="Putative myosin regulatory light chain sqh"/>
    <property type="match status" value="1"/>
</dbReference>
<dbReference type="Gene3D" id="1.10.238.10">
    <property type="entry name" value="EF-hand"/>
    <property type="match status" value="2"/>
</dbReference>
<dbReference type="InterPro" id="IPR011992">
    <property type="entry name" value="EF-hand-dom_pair"/>
</dbReference>
<dbReference type="InterPro" id="IPR018247">
    <property type="entry name" value="EF_Hand_1_Ca_BS"/>
</dbReference>
<dbReference type="InterPro" id="IPR002048">
    <property type="entry name" value="EF_hand_dom"/>
</dbReference>
<dbReference type="InterPro" id="IPR050403">
    <property type="entry name" value="Myosin_RLC"/>
</dbReference>
<dbReference type="PANTHER" id="PTHR23049">
    <property type="entry name" value="MYOSIN REGULATORY LIGHT CHAIN 2"/>
    <property type="match status" value="1"/>
</dbReference>
<dbReference type="Pfam" id="PF13499">
    <property type="entry name" value="EF-hand_7"/>
    <property type="match status" value="1"/>
</dbReference>
<dbReference type="SMART" id="SM00054">
    <property type="entry name" value="EFh"/>
    <property type="match status" value="2"/>
</dbReference>
<dbReference type="SUPFAM" id="SSF47473">
    <property type="entry name" value="EF-hand"/>
    <property type="match status" value="1"/>
</dbReference>
<dbReference type="PROSITE" id="PS00018">
    <property type="entry name" value="EF_HAND_1"/>
    <property type="match status" value="1"/>
</dbReference>
<dbReference type="PROSITE" id="PS50222">
    <property type="entry name" value="EF_HAND_2"/>
    <property type="match status" value="3"/>
</dbReference>
<accession>Q02045</accession>
<accession>Q8IXL8</accession>
<feature type="chain" id="PRO_0000198745" description="Myosin light chain 5">
    <location>
        <begin position="1"/>
        <end position="173"/>
    </location>
</feature>
<feature type="domain" description="EF-hand 1" evidence="2">
    <location>
        <begin position="30"/>
        <end position="65"/>
    </location>
</feature>
<feature type="domain" description="EF-hand 2" evidence="2">
    <location>
        <begin position="100"/>
        <end position="135"/>
    </location>
</feature>
<feature type="domain" description="EF-hand 3" evidence="2">
    <location>
        <begin position="136"/>
        <end position="171"/>
    </location>
</feature>
<feature type="region of interest" description="Disordered" evidence="3">
    <location>
        <begin position="1"/>
        <end position="20"/>
    </location>
</feature>
<feature type="binding site" evidence="2">
    <location>
        <position position="43"/>
    </location>
    <ligand>
        <name>Ca(2+)</name>
        <dbReference type="ChEBI" id="CHEBI:29108"/>
    </ligand>
</feature>
<feature type="binding site" evidence="2">
    <location>
        <position position="45"/>
    </location>
    <ligand>
        <name>Ca(2+)</name>
        <dbReference type="ChEBI" id="CHEBI:29108"/>
    </ligand>
</feature>
<feature type="binding site" evidence="2">
    <location>
        <position position="47"/>
    </location>
    <ligand>
        <name>Ca(2+)</name>
        <dbReference type="ChEBI" id="CHEBI:29108"/>
    </ligand>
</feature>
<feature type="binding site" evidence="2">
    <location>
        <position position="54"/>
    </location>
    <ligand>
        <name>Ca(2+)</name>
        <dbReference type="ChEBI" id="CHEBI:29108"/>
    </ligand>
</feature>
<feature type="splice variant" id="VSP_026448" description="In isoform 2." evidence="4">
    <location>
        <begin position="1"/>
        <end position="41"/>
    </location>
</feature>
<feature type="sequence variant" id="VAR_050459" description="In dbSNP:rs2228354.">
    <original>F</original>
    <variation>S</variation>
    <location>
        <position position="88"/>
    </location>
</feature>